<dbReference type="EC" id="2.7.1.40" evidence="5"/>
<dbReference type="EMBL" id="DP000010">
    <property type="protein sequence ID" value="ABA91483.1"/>
    <property type="molecule type" value="Genomic_DNA"/>
</dbReference>
<dbReference type="EMBL" id="AP008217">
    <property type="protein sequence ID" value="BAF27594.1"/>
    <property type="molecule type" value="Genomic_DNA"/>
</dbReference>
<dbReference type="EMBL" id="AP014967">
    <property type="protein sequence ID" value="BAT12686.1"/>
    <property type="molecule type" value="Genomic_DNA"/>
</dbReference>
<dbReference type="EMBL" id="CM000148">
    <property type="protein sequence ID" value="EEE51656.1"/>
    <property type="molecule type" value="Genomic_DNA"/>
</dbReference>
<dbReference type="EMBL" id="AK061668">
    <property type="protein sequence ID" value="BAG88051.1"/>
    <property type="molecule type" value="mRNA"/>
</dbReference>
<dbReference type="RefSeq" id="XP_015616831.1">
    <property type="nucleotide sequence ID" value="XM_015761345.1"/>
</dbReference>
<dbReference type="SMR" id="Q2RAK2"/>
<dbReference type="FunCoup" id="Q2RAK2">
    <property type="interactions" value="650"/>
</dbReference>
<dbReference type="STRING" id="39947.Q2RAK2"/>
<dbReference type="PaxDb" id="39947-Q2RAK2"/>
<dbReference type="EnsemblPlants" id="Os11t0148500-02">
    <property type="protein sequence ID" value="Os11t0148500-02"/>
    <property type="gene ID" value="Os11g0148500"/>
</dbReference>
<dbReference type="Gramene" id="Os11t0148500-02">
    <property type="protein sequence ID" value="Os11t0148500-02"/>
    <property type="gene ID" value="Os11g0148500"/>
</dbReference>
<dbReference type="KEGG" id="dosa:Os11g0148500"/>
<dbReference type="eggNOG" id="KOG2323">
    <property type="taxonomic scope" value="Eukaryota"/>
</dbReference>
<dbReference type="HOGENOM" id="CLU_015439_9_1_1"/>
<dbReference type="InParanoid" id="Q2RAK2"/>
<dbReference type="OMA" id="VRGLYPM"/>
<dbReference type="OrthoDB" id="108365at2759"/>
<dbReference type="UniPathway" id="UPA00109">
    <property type="reaction ID" value="UER00188"/>
</dbReference>
<dbReference type="Proteomes" id="UP000000763">
    <property type="component" value="Chromosome 11"/>
</dbReference>
<dbReference type="Proteomes" id="UP000007752">
    <property type="component" value="Chromosome 11"/>
</dbReference>
<dbReference type="Proteomes" id="UP000059680">
    <property type="component" value="Chromosome 11"/>
</dbReference>
<dbReference type="ExpressionAtlas" id="Q2RAK2">
    <property type="expression patterns" value="baseline and differential"/>
</dbReference>
<dbReference type="GO" id="GO:0005737">
    <property type="term" value="C:cytoplasm"/>
    <property type="evidence" value="ECO:0000318"/>
    <property type="project" value="GO_Central"/>
</dbReference>
<dbReference type="GO" id="GO:0005829">
    <property type="term" value="C:cytosol"/>
    <property type="evidence" value="ECO:0000314"/>
    <property type="project" value="UniProtKB"/>
</dbReference>
<dbReference type="GO" id="GO:0005524">
    <property type="term" value="F:ATP binding"/>
    <property type="evidence" value="ECO:0007669"/>
    <property type="project" value="UniProtKB-KW"/>
</dbReference>
<dbReference type="GO" id="GO:0016301">
    <property type="term" value="F:kinase activity"/>
    <property type="evidence" value="ECO:0007669"/>
    <property type="project" value="UniProtKB-KW"/>
</dbReference>
<dbReference type="GO" id="GO:0000287">
    <property type="term" value="F:magnesium ion binding"/>
    <property type="evidence" value="ECO:0007669"/>
    <property type="project" value="InterPro"/>
</dbReference>
<dbReference type="GO" id="GO:0030955">
    <property type="term" value="F:potassium ion binding"/>
    <property type="evidence" value="ECO:0007669"/>
    <property type="project" value="InterPro"/>
</dbReference>
<dbReference type="GO" id="GO:0004743">
    <property type="term" value="F:pyruvate kinase activity"/>
    <property type="evidence" value="ECO:0000314"/>
    <property type="project" value="UniProtKB"/>
</dbReference>
<dbReference type="GO" id="GO:0006096">
    <property type="term" value="P:glycolytic process"/>
    <property type="evidence" value="ECO:0000314"/>
    <property type="project" value="UniProtKB"/>
</dbReference>
<dbReference type="FunFam" id="2.40.33.10:FF:000004">
    <property type="entry name" value="Pyruvate kinase"/>
    <property type="match status" value="1"/>
</dbReference>
<dbReference type="FunFam" id="3.40.1380.20:FF:000006">
    <property type="entry name" value="Pyruvate kinase"/>
    <property type="match status" value="1"/>
</dbReference>
<dbReference type="Gene3D" id="3.20.20.60">
    <property type="entry name" value="Phosphoenolpyruvate-binding domains"/>
    <property type="match status" value="1"/>
</dbReference>
<dbReference type="Gene3D" id="2.40.33.10">
    <property type="entry name" value="PK beta-barrel domain-like"/>
    <property type="match status" value="1"/>
</dbReference>
<dbReference type="Gene3D" id="3.40.1380.20">
    <property type="entry name" value="Pyruvate kinase, C-terminal domain"/>
    <property type="match status" value="1"/>
</dbReference>
<dbReference type="InterPro" id="IPR001697">
    <property type="entry name" value="Pyr_Knase"/>
</dbReference>
<dbReference type="InterPro" id="IPR015813">
    <property type="entry name" value="Pyrv/PenolPyrv_kinase-like_dom"/>
</dbReference>
<dbReference type="InterPro" id="IPR040442">
    <property type="entry name" value="Pyrv_kinase-like_dom_sf"/>
</dbReference>
<dbReference type="InterPro" id="IPR011037">
    <property type="entry name" value="Pyrv_Knase-like_insert_dom_sf"/>
</dbReference>
<dbReference type="InterPro" id="IPR015793">
    <property type="entry name" value="Pyrv_Knase_brl"/>
</dbReference>
<dbReference type="InterPro" id="IPR015795">
    <property type="entry name" value="Pyrv_Knase_C"/>
</dbReference>
<dbReference type="InterPro" id="IPR036918">
    <property type="entry name" value="Pyrv_Knase_C_sf"/>
</dbReference>
<dbReference type="InterPro" id="IPR015806">
    <property type="entry name" value="Pyrv_Knase_insert_dom_sf"/>
</dbReference>
<dbReference type="NCBIfam" id="TIGR01064">
    <property type="entry name" value="pyruv_kin"/>
    <property type="match status" value="1"/>
</dbReference>
<dbReference type="PANTHER" id="PTHR11817">
    <property type="entry name" value="PYRUVATE KINASE"/>
    <property type="match status" value="1"/>
</dbReference>
<dbReference type="Pfam" id="PF00224">
    <property type="entry name" value="PK"/>
    <property type="match status" value="1"/>
</dbReference>
<dbReference type="Pfam" id="PF02887">
    <property type="entry name" value="PK_C"/>
    <property type="match status" value="1"/>
</dbReference>
<dbReference type="PRINTS" id="PR01050">
    <property type="entry name" value="PYRUVTKNASE"/>
</dbReference>
<dbReference type="SUPFAM" id="SSF51621">
    <property type="entry name" value="Phosphoenolpyruvate/pyruvate domain"/>
    <property type="match status" value="1"/>
</dbReference>
<dbReference type="SUPFAM" id="SSF50800">
    <property type="entry name" value="PK beta-barrel domain-like"/>
    <property type="match status" value="1"/>
</dbReference>
<dbReference type="SUPFAM" id="SSF52935">
    <property type="entry name" value="PK C-terminal domain-like"/>
    <property type="match status" value="1"/>
</dbReference>
<comment type="function">
    <text evidence="5">Key regulatory enzyme of the glycolytic pathway that catalyzes the final step of glycolysis, converting ADP and phosphoenolpyruvate (PEP) to ATP and pyruvate by essentially irreversible transphosphorylation. Is critical for plant growth and development.</text>
</comment>
<comment type="catalytic activity">
    <reaction evidence="5">
        <text>pyruvate + ATP = phosphoenolpyruvate + ADP + H(+)</text>
        <dbReference type="Rhea" id="RHEA:18157"/>
        <dbReference type="ChEBI" id="CHEBI:15361"/>
        <dbReference type="ChEBI" id="CHEBI:15378"/>
        <dbReference type="ChEBI" id="CHEBI:30616"/>
        <dbReference type="ChEBI" id="CHEBI:58702"/>
        <dbReference type="ChEBI" id="CHEBI:456216"/>
        <dbReference type="EC" id="2.7.1.40"/>
    </reaction>
</comment>
<comment type="cofactor">
    <cofactor evidence="4">
        <name>Mg(2+)</name>
        <dbReference type="ChEBI" id="CHEBI:18420"/>
    </cofactor>
</comment>
<comment type="cofactor">
    <cofactor evidence="4">
        <name>K(+)</name>
        <dbReference type="ChEBI" id="CHEBI:29103"/>
    </cofactor>
</comment>
<comment type="pathway">
    <text evidence="7">Carbohydrate degradation; glycolysis; pyruvate from D-glyceraldehyde 3-phosphate: step 5/5.</text>
</comment>
<comment type="subunit">
    <text evidence="3">Homotetramer.</text>
</comment>
<comment type="subcellular location">
    <subcellularLocation>
        <location evidence="5">Cytoplasm</location>
        <location evidence="5">Cytosol</location>
    </subcellularLocation>
</comment>
<comment type="tissue specificity">
    <text evidence="5">Expressed in leaf mesophyll cells, phloem companion cells in stems, cortical parenchyma cells in roots, glumes, anthers, stigma and style of young florets, and milky stage seeds.</text>
</comment>
<comment type="disruption phenotype">
    <text evidence="5">Dwarf phenotype with panicle enclosure, reduced seed set and outgrowth of axillary buds from culm nodes.</text>
</comment>
<comment type="similarity">
    <text evidence="7">Belongs to the pyruvate kinase family.</text>
</comment>
<keyword id="KW-0067">ATP-binding</keyword>
<keyword id="KW-0963">Cytoplasm</keyword>
<keyword id="KW-0324">Glycolysis</keyword>
<keyword id="KW-0418">Kinase</keyword>
<keyword id="KW-0460">Magnesium</keyword>
<keyword id="KW-0479">Metal-binding</keyword>
<keyword id="KW-0547">Nucleotide-binding</keyword>
<keyword id="KW-0630">Potassium</keyword>
<keyword id="KW-0670">Pyruvate</keyword>
<keyword id="KW-1185">Reference proteome</keyword>
<keyword id="KW-0808">Transferase</keyword>
<accession>Q2RAK2</accession>
<accession>A0A0P0XZ05</accession>
<sequence>MHSTNLLLEEPIRMASILEPSKPSFFPAMTKIVGTLGPKSRAVDTISSCLKAGMSVARFDFSWGDAEYHQETLENLKLAIKSTKKLCAVMLDTVGPELQVVNKSEAAISLEANGTVVLTPDQGQEASSELLPINFSGLAKALKPGATIFVGQYLFTGSETTSVWLEVSEVKGDDVVCVIKNSATLAGSLFTLHCSQIHIDLPTLSDEDKEVIRRWGAPNKIDFLSLSYTRHAEDVRQAREFLSKLGDLSQTQIFAKIENVEGLNHFDEILQEADGIILSRGNLGIDLPPEKVFLFQKSALHKCNMAGKPAVVTRVVDSMTDNLRPTRAEATDVANAVLDGSDAILLGAETLRGLYPVETISIVGKICAEAEKVFNQDLYFKRTVKYVGEPMTHLESIASSAVRAAIKVKASVIICFTSSGRAARLIAKYRPTMPVLSVVIPRLKTNQLRWSFTGAFEARQSLIVRGLFPMLADPRHPAESTSATNESVLKVALDHGKASGVIKSHDRVVVCQKVGDSSVVKIIELDD</sequence>
<evidence type="ECO:0000250" key="1">
    <source>
        <dbReference type="UniProtKB" id="P00549"/>
    </source>
</evidence>
<evidence type="ECO:0000250" key="2">
    <source>
        <dbReference type="UniProtKB" id="P14618"/>
    </source>
</evidence>
<evidence type="ECO:0000250" key="3">
    <source>
        <dbReference type="UniProtKB" id="P30613"/>
    </source>
</evidence>
<evidence type="ECO:0000250" key="4">
    <source>
        <dbReference type="UniProtKB" id="Q9LIK0"/>
    </source>
</evidence>
<evidence type="ECO:0000269" key="5">
    <source>
    </source>
</evidence>
<evidence type="ECO:0000303" key="6">
    <source>
    </source>
</evidence>
<evidence type="ECO:0000305" key="7"/>
<evidence type="ECO:0000312" key="8">
    <source>
        <dbReference type="EMBL" id="ABA91483.1"/>
    </source>
</evidence>
<evidence type="ECO:0000312" key="9">
    <source>
        <dbReference type="EMBL" id="BAF27594.1"/>
    </source>
</evidence>
<evidence type="ECO:0000312" key="10">
    <source>
        <dbReference type="EMBL" id="EEE51656.1"/>
    </source>
</evidence>
<organism>
    <name type="scientific">Oryza sativa subsp. japonica</name>
    <name type="common">Rice</name>
    <dbReference type="NCBI Taxonomy" id="39947"/>
    <lineage>
        <taxon>Eukaryota</taxon>
        <taxon>Viridiplantae</taxon>
        <taxon>Streptophyta</taxon>
        <taxon>Embryophyta</taxon>
        <taxon>Tracheophyta</taxon>
        <taxon>Spermatophyta</taxon>
        <taxon>Magnoliopsida</taxon>
        <taxon>Liliopsida</taxon>
        <taxon>Poales</taxon>
        <taxon>Poaceae</taxon>
        <taxon>BOP clade</taxon>
        <taxon>Oryzoideae</taxon>
        <taxon>Oryzeae</taxon>
        <taxon>Oryzinae</taxon>
        <taxon>Oryza</taxon>
        <taxon>Oryza sativa</taxon>
    </lineage>
</organism>
<feature type="chain" id="PRO_0000433955" description="Pyruvate kinase 1, cytosolic">
    <location>
        <begin position="1"/>
        <end position="527"/>
    </location>
</feature>
<feature type="binding site" evidence="3">
    <location>
        <position position="58"/>
    </location>
    <ligand>
        <name>substrate</name>
    </ligand>
</feature>
<feature type="binding site" evidence="2">
    <location>
        <begin position="60"/>
        <end position="63"/>
    </location>
    <ligand>
        <name>ATP</name>
        <dbReference type="ChEBI" id="CHEBI:30616"/>
    </ligand>
</feature>
<feature type="binding site" evidence="3">
    <location>
        <position position="60"/>
    </location>
    <ligand>
        <name>K(+)</name>
        <dbReference type="ChEBI" id="CHEBI:29103"/>
    </ligand>
</feature>
<feature type="binding site" evidence="3">
    <location>
        <position position="62"/>
    </location>
    <ligand>
        <name>K(+)</name>
        <dbReference type="ChEBI" id="CHEBI:29103"/>
    </ligand>
</feature>
<feature type="binding site" evidence="3">
    <location>
        <position position="92"/>
    </location>
    <ligand>
        <name>K(+)</name>
        <dbReference type="ChEBI" id="CHEBI:29103"/>
    </ligand>
</feature>
<feature type="binding site" evidence="3">
    <location>
        <position position="93"/>
    </location>
    <ligand>
        <name>K(+)</name>
        <dbReference type="ChEBI" id="CHEBI:29103"/>
    </ligand>
</feature>
<feature type="binding site" evidence="3">
    <location>
        <position position="256"/>
    </location>
    <ligand>
        <name>substrate</name>
    </ligand>
</feature>
<feature type="binding site" evidence="2">
    <location>
        <position position="258"/>
    </location>
    <ligand>
        <name>Mg(2+)</name>
        <dbReference type="ChEBI" id="CHEBI:18420"/>
    </ligand>
</feature>
<feature type="binding site" evidence="3">
    <location>
        <position position="281"/>
    </location>
    <ligand>
        <name>substrate</name>
    </ligand>
</feature>
<feature type="binding site" evidence="2">
    <location>
        <position position="282"/>
    </location>
    <ligand>
        <name>Mg(2+)</name>
        <dbReference type="ChEBI" id="CHEBI:18420"/>
    </ligand>
</feature>
<feature type="binding site" evidence="3">
    <location>
        <position position="282"/>
    </location>
    <ligand>
        <name>substrate</name>
    </ligand>
</feature>
<feature type="binding site" evidence="3">
    <location>
        <position position="313"/>
    </location>
    <ligand>
        <name>substrate</name>
    </ligand>
</feature>
<feature type="site" description="Transition state stabilizer" evidence="1">
    <location>
        <position position="256"/>
    </location>
</feature>
<name>KPYC1_ORYSJ</name>
<protein>
    <recommendedName>
        <fullName evidence="7">Pyruvate kinase 1, cytosolic</fullName>
        <shortName evidence="6">OsPK1</shortName>
        <ecNumber evidence="5">2.7.1.40</ecNumber>
    </recommendedName>
</protein>
<gene>
    <name evidence="9" type="ordered locus">Os11g0148500</name>
    <name evidence="8" type="ordered locus">LOC_Os11g05110</name>
    <name evidence="10" type="ORF">OsJ_32969</name>
</gene>
<reference key="1">
    <citation type="journal article" date="2005" name="BMC Biol.">
        <title>The sequence of rice chromosomes 11 and 12, rich in disease resistance genes and recent gene duplications.</title>
        <authorList>
            <consortium name="The rice chromosomes 11 and 12 sequencing consortia"/>
        </authorList>
    </citation>
    <scope>NUCLEOTIDE SEQUENCE [LARGE SCALE GENOMIC DNA]</scope>
    <source>
        <strain>cv. Nipponbare</strain>
    </source>
</reference>
<reference key="2">
    <citation type="journal article" date="2005" name="Nature">
        <title>The map-based sequence of the rice genome.</title>
        <authorList>
            <consortium name="International rice genome sequencing project (IRGSP)"/>
        </authorList>
    </citation>
    <scope>NUCLEOTIDE SEQUENCE [LARGE SCALE GENOMIC DNA]</scope>
    <source>
        <strain>cv. Nipponbare</strain>
    </source>
</reference>
<reference key="3">
    <citation type="journal article" date="2008" name="Nucleic Acids Res.">
        <title>The rice annotation project database (RAP-DB): 2008 update.</title>
        <authorList>
            <consortium name="The rice annotation project (RAP)"/>
        </authorList>
    </citation>
    <scope>GENOME REANNOTATION</scope>
    <source>
        <strain>cv. Nipponbare</strain>
    </source>
</reference>
<reference key="4">
    <citation type="journal article" date="2013" name="Rice">
        <title>Improvement of the Oryza sativa Nipponbare reference genome using next generation sequence and optical map data.</title>
        <authorList>
            <person name="Kawahara Y."/>
            <person name="de la Bastide M."/>
            <person name="Hamilton J.P."/>
            <person name="Kanamori H."/>
            <person name="McCombie W.R."/>
            <person name="Ouyang S."/>
            <person name="Schwartz D.C."/>
            <person name="Tanaka T."/>
            <person name="Wu J."/>
            <person name="Zhou S."/>
            <person name="Childs K.L."/>
            <person name="Davidson R.M."/>
            <person name="Lin H."/>
            <person name="Quesada-Ocampo L."/>
            <person name="Vaillancourt B."/>
            <person name="Sakai H."/>
            <person name="Lee S.S."/>
            <person name="Kim J."/>
            <person name="Numa H."/>
            <person name="Itoh T."/>
            <person name="Buell C.R."/>
            <person name="Matsumoto T."/>
        </authorList>
    </citation>
    <scope>GENOME REANNOTATION</scope>
    <source>
        <strain>cv. Nipponbare</strain>
    </source>
</reference>
<reference key="5">
    <citation type="journal article" date="2005" name="PLoS Biol.">
        <title>The genomes of Oryza sativa: a history of duplications.</title>
        <authorList>
            <person name="Yu J."/>
            <person name="Wang J."/>
            <person name="Lin W."/>
            <person name="Li S."/>
            <person name="Li H."/>
            <person name="Zhou J."/>
            <person name="Ni P."/>
            <person name="Dong W."/>
            <person name="Hu S."/>
            <person name="Zeng C."/>
            <person name="Zhang J."/>
            <person name="Zhang Y."/>
            <person name="Li R."/>
            <person name="Xu Z."/>
            <person name="Li S."/>
            <person name="Li X."/>
            <person name="Zheng H."/>
            <person name="Cong L."/>
            <person name="Lin L."/>
            <person name="Yin J."/>
            <person name="Geng J."/>
            <person name="Li G."/>
            <person name="Shi J."/>
            <person name="Liu J."/>
            <person name="Lv H."/>
            <person name="Li J."/>
            <person name="Wang J."/>
            <person name="Deng Y."/>
            <person name="Ran L."/>
            <person name="Shi X."/>
            <person name="Wang X."/>
            <person name="Wu Q."/>
            <person name="Li C."/>
            <person name="Ren X."/>
            <person name="Wang J."/>
            <person name="Wang X."/>
            <person name="Li D."/>
            <person name="Liu D."/>
            <person name="Zhang X."/>
            <person name="Ji Z."/>
            <person name="Zhao W."/>
            <person name="Sun Y."/>
            <person name="Zhang Z."/>
            <person name="Bao J."/>
            <person name="Han Y."/>
            <person name="Dong L."/>
            <person name="Ji J."/>
            <person name="Chen P."/>
            <person name="Wu S."/>
            <person name="Liu J."/>
            <person name="Xiao Y."/>
            <person name="Bu D."/>
            <person name="Tan J."/>
            <person name="Yang L."/>
            <person name="Ye C."/>
            <person name="Zhang J."/>
            <person name="Xu J."/>
            <person name="Zhou Y."/>
            <person name="Yu Y."/>
            <person name="Zhang B."/>
            <person name="Zhuang S."/>
            <person name="Wei H."/>
            <person name="Liu B."/>
            <person name="Lei M."/>
            <person name="Yu H."/>
            <person name="Li Y."/>
            <person name="Xu H."/>
            <person name="Wei S."/>
            <person name="He X."/>
            <person name="Fang L."/>
            <person name="Zhang Z."/>
            <person name="Zhang Y."/>
            <person name="Huang X."/>
            <person name="Su Z."/>
            <person name="Tong W."/>
            <person name="Li J."/>
            <person name="Tong Z."/>
            <person name="Li S."/>
            <person name="Ye J."/>
            <person name="Wang L."/>
            <person name="Fang L."/>
            <person name="Lei T."/>
            <person name="Chen C.-S."/>
            <person name="Chen H.-C."/>
            <person name="Xu Z."/>
            <person name="Li H."/>
            <person name="Huang H."/>
            <person name="Zhang F."/>
            <person name="Xu H."/>
            <person name="Li N."/>
            <person name="Zhao C."/>
            <person name="Li S."/>
            <person name="Dong L."/>
            <person name="Huang Y."/>
            <person name="Li L."/>
            <person name="Xi Y."/>
            <person name="Qi Q."/>
            <person name="Li W."/>
            <person name="Zhang B."/>
            <person name="Hu W."/>
            <person name="Zhang Y."/>
            <person name="Tian X."/>
            <person name="Jiao Y."/>
            <person name="Liang X."/>
            <person name="Jin J."/>
            <person name="Gao L."/>
            <person name="Zheng W."/>
            <person name="Hao B."/>
            <person name="Liu S.-M."/>
            <person name="Wang W."/>
            <person name="Yuan L."/>
            <person name="Cao M."/>
            <person name="McDermott J."/>
            <person name="Samudrala R."/>
            <person name="Wang J."/>
            <person name="Wong G.K.-S."/>
            <person name="Yang H."/>
        </authorList>
    </citation>
    <scope>NUCLEOTIDE SEQUENCE [LARGE SCALE GENOMIC DNA]</scope>
    <source>
        <strain>cv. Nipponbare</strain>
    </source>
</reference>
<reference key="6">
    <citation type="journal article" date="2003" name="Science">
        <title>Collection, mapping, and annotation of over 28,000 cDNA clones from japonica rice.</title>
        <authorList>
            <consortium name="The rice full-length cDNA consortium"/>
        </authorList>
    </citation>
    <scope>NUCLEOTIDE SEQUENCE [LARGE SCALE MRNA]</scope>
    <source>
        <strain>cv. Nipponbare</strain>
    </source>
</reference>
<reference key="7">
    <citation type="journal article" date="2012" name="Planta">
        <title>Downregulation of OsPK1, a cytosolic pyruvate kinase, by T-DNA insertion causes dwarfism and panicle enclosure in rice.</title>
        <authorList>
            <person name="Zhang Y."/>
            <person name="Xiao W."/>
            <person name="Luo L."/>
            <person name="Pang J."/>
            <person name="Rong W."/>
            <person name="He C."/>
        </authorList>
    </citation>
    <scope>FUNCTION</scope>
    <scope>CATALYTIC ACTIVITY</scope>
    <scope>SUBCELLULAR LOCATION</scope>
    <scope>TISSUE SPECIFICITY</scope>
    <scope>DISRUPTION PHENOTYPE</scope>
</reference>
<proteinExistence type="evidence at protein level"/>